<comment type="subcellular location">
    <subcellularLocation>
        <location evidence="1">Nucleus</location>
    </subcellularLocation>
</comment>
<comment type="developmental stage">
    <text evidence="3">Detected at 6-7 hours post-fertilization (hpf). Levels increase after 10 hpf and highest expression is seen at 24 hpf.</text>
</comment>
<comment type="similarity">
    <text evidence="4">Belongs to the H2.0 homeobox family.</text>
</comment>
<organism>
    <name type="scientific">Danio rerio</name>
    <name type="common">Zebrafish</name>
    <name type="synonym">Brachydanio rerio</name>
    <dbReference type="NCBI Taxonomy" id="7955"/>
    <lineage>
        <taxon>Eukaryota</taxon>
        <taxon>Metazoa</taxon>
        <taxon>Chordata</taxon>
        <taxon>Craniata</taxon>
        <taxon>Vertebrata</taxon>
        <taxon>Euteleostomi</taxon>
        <taxon>Actinopterygii</taxon>
        <taxon>Neopterygii</taxon>
        <taxon>Teleostei</taxon>
        <taxon>Ostariophysi</taxon>
        <taxon>Cypriniformes</taxon>
        <taxon>Danionidae</taxon>
        <taxon>Danioninae</taxon>
        <taxon>Danio</taxon>
    </lineage>
</organism>
<evidence type="ECO:0000255" key="1">
    <source>
        <dbReference type="PROSITE-ProRule" id="PRU00108"/>
    </source>
</evidence>
<evidence type="ECO:0000256" key="2">
    <source>
        <dbReference type="SAM" id="MobiDB-lite"/>
    </source>
</evidence>
<evidence type="ECO:0000269" key="3">
    <source>
    </source>
</evidence>
<evidence type="ECO:0000305" key="4"/>
<name>DBX1B_DANRE</name>
<feature type="chain" id="PRO_0000302846" description="Homeobox protein DBX1-B">
    <location>
        <begin position="1"/>
        <end position="322"/>
    </location>
</feature>
<feature type="DNA-binding region" description="Homeobox" evidence="1">
    <location>
        <begin position="179"/>
        <end position="238"/>
    </location>
</feature>
<feature type="region of interest" description="Disordered" evidence="2">
    <location>
        <begin position="238"/>
        <end position="266"/>
    </location>
</feature>
<feature type="region of interest" description="Disordered" evidence="2">
    <location>
        <begin position="296"/>
        <end position="322"/>
    </location>
</feature>
<feature type="compositionally biased region" description="Acidic residues" evidence="2">
    <location>
        <begin position="312"/>
        <end position="322"/>
    </location>
</feature>
<protein>
    <recommendedName>
        <fullName>Homeobox protein DBX1-B</fullName>
    </recommendedName>
    <alternativeName>
        <fullName>Developing brain homeobox protein 1-B</fullName>
    </alternativeName>
    <alternativeName>
        <fullName>Homeobox protein hlx2</fullName>
    </alternativeName>
</protein>
<sequence>MMLPSVIAPPAMYPSFLRPSSALSLPPALQSAFTTHSSFLVEDLLRISRPAAFMHRSIPSPSASPPATGVTTLNTTSSAVHVAMSTALAKRSSSPQTSISSDPNYLKFGVNAILASTTRNASPPPPVQGMNAKTFPFPCFDGSFHPFIRASYFPASSSAVPIPGTFAWPLTARGKPRRGMLRRAVFSDVQRKALEKMFQKQKYISKPDRKKLATKLGLKDSQVKIWFQNRRMKWRNSKERELLSSGGCREQTLPTKMNPNPDLSDVGKRFEHEAVLRESPRAPFCQSRGDHEFNADLHFKSPSISSKHSDFSESEDEEITVS</sequence>
<proteinExistence type="evidence at transcript level"/>
<dbReference type="EMBL" id="AF030285">
    <property type="protein sequence ID" value="AAF18562.1"/>
    <property type="molecule type" value="mRNA"/>
</dbReference>
<dbReference type="RefSeq" id="NP_571253.1">
    <property type="nucleotide sequence ID" value="NM_131178.1"/>
</dbReference>
<dbReference type="SMR" id="Q9PTU0"/>
<dbReference type="FunCoup" id="Q9PTU0">
    <property type="interactions" value="218"/>
</dbReference>
<dbReference type="STRING" id="7955.ENSDARP00000013350"/>
<dbReference type="PaxDb" id="7955-ENSDARP00000013350"/>
<dbReference type="Ensembl" id="ENSDART00000180577">
    <property type="protein sequence ID" value="ENSDARP00000157556"/>
    <property type="gene ID" value="ENSDARG00000113468"/>
</dbReference>
<dbReference type="GeneID" id="30416"/>
<dbReference type="KEGG" id="dre:30416"/>
<dbReference type="AGR" id="ZFIN:ZDB-GENE-000128-11"/>
<dbReference type="CTD" id="30416"/>
<dbReference type="ZFIN" id="ZDB-GENE-000128-11">
    <property type="gene designation" value="dbx1b"/>
</dbReference>
<dbReference type="eggNOG" id="KOG0488">
    <property type="taxonomic scope" value="Eukaryota"/>
</dbReference>
<dbReference type="InParanoid" id="Q9PTU0"/>
<dbReference type="OMA" id="HHAMHGK"/>
<dbReference type="OrthoDB" id="10048112at2759"/>
<dbReference type="PhylomeDB" id="Q9PTU0"/>
<dbReference type="PRO" id="PR:Q9PTU0"/>
<dbReference type="Proteomes" id="UP000000437">
    <property type="component" value="Alternate scaffold 25"/>
</dbReference>
<dbReference type="Proteomes" id="UP000000437">
    <property type="component" value="Chromosome 25"/>
</dbReference>
<dbReference type="Bgee" id="ENSDARG00000113468">
    <property type="expression patterns" value="Expressed in nucleus of thalamus and 19 other cell types or tissues"/>
</dbReference>
<dbReference type="GO" id="GO:0005634">
    <property type="term" value="C:nucleus"/>
    <property type="evidence" value="ECO:0007669"/>
    <property type="project" value="UniProtKB-SubCell"/>
</dbReference>
<dbReference type="GO" id="GO:0003677">
    <property type="term" value="F:DNA binding"/>
    <property type="evidence" value="ECO:0007669"/>
    <property type="project" value="UniProtKB-KW"/>
</dbReference>
<dbReference type="GO" id="GO:0000981">
    <property type="term" value="F:DNA-binding transcription factor activity, RNA polymerase II-specific"/>
    <property type="evidence" value="ECO:0007669"/>
    <property type="project" value="InterPro"/>
</dbReference>
<dbReference type="GO" id="GO:0021515">
    <property type="term" value="P:cell differentiation in spinal cord"/>
    <property type="evidence" value="ECO:0000316"/>
    <property type="project" value="ZFIN"/>
</dbReference>
<dbReference type="GO" id="GO:0006357">
    <property type="term" value="P:regulation of transcription by RNA polymerase II"/>
    <property type="evidence" value="ECO:0000318"/>
    <property type="project" value="GO_Central"/>
</dbReference>
<dbReference type="CDD" id="cd00086">
    <property type="entry name" value="homeodomain"/>
    <property type="match status" value="1"/>
</dbReference>
<dbReference type="FunFam" id="1.10.10.60:FF:000177">
    <property type="entry name" value="Homeobox protein DBX1"/>
    <property type="match status" value="1"/>
</dbReference>
<dbReference type="Gene3D" id="1.10.10.60">
    <property type="entry name" value="Homeodomain-like"/>
    <property type="match status" value="1"/>
</dbReference>
<dbReference type="InterPro" id="IPR051662">
    <property type="entry name" value="H2.0_Homeobox_NeuralPatt"/>
</dbReference>
<dbReference type="InterPro" id="IPR001356">
    <property type="entry name" value="HD"/>
</dbReference>
<dbReference type="InterPro" id="IPR020479">
    <property type="entry name" value="HD_metazoa"/>
</dbReference>
<dbReference type="InterPro" id="IPR017970">
    <property type="entry name" value="Homeobox_CS"/>
</dbReference>
<dbReference type="InterPro" id="IPR009057">
    <property type="entry name" value="Homeodomain-like_sf"/>
</dbReference>
<dbReference type="InterPro" id="IPR000047">
    <property type="entry name" value="HTH_motif"/>
</dbReference>
<dbReference type="PANTHER" id="PTHR24331">
    <property type="entry name" value="DBX"/>
    <property type="match status" value="1"/>
</dbReference>
<dbReference type="PANTHER" id="PTHR24331:SF6">
    <property type="entry name" value="HOMEOBOX PROTEIN DBX1"/>
    <property type="match status" value="1"/>
</dbReference>
<dbReference type="Pfam" id="PF00046">
    <property type="entry name" value="Homeodomain"/>
    <property type="match status" value="1"/>
</dbReference>
<dbReference type="PRINTS" id="PR00024">
    <property type="entry name" value="HOMEOBOX"/>
</dbReference>
<dbReference type="PRINTS" id="PR00031">
    <property type="entry name" value="HTHREPRESSR"/>
</dbReference>
<dbReference type="SMART" id="SM00389">
    <property type="entry name" value="HOX"/>
    <property type="match status" value="1"/>
</dbReference>
<dbReference type="SUPFAM" id="SSF46689">
    <property type="entry name" value="Homeodomain-like"/>
    <property type="match status" value="1"/>
</dbReference>
<dbReference type="PROSITE" id="PS00027">
    <property type="entry name" value="HOMEOBOX_1"/>
    <property type="match status" value="1"/>
</dbReference>
<dbReference type="PROSITE" id="PS50071">
    <property type="entry name" value="HOMEOBOX_2"/>
    <property type="match status" value="1"/>
</dbReference>
<accession>Q9PTU0</accession>
<keyword id="KW-0217">Developmental protein</keyword>
<keyword id="KW-0238">DNA-binding</keyword>
<keyword id="KW-0371">Homeobox</keyword>
<keyword id="KW-0539">Nucleus</keyword>
<keyword id="KW-1185">Reference proteome</keyword>
<gene>
    <name type="primary">dbx1b</name>
    <name type="synonym">hlx2</name>
</gene>
<reference key="1">
    <citation type="journal article" date="1999" name="Biochim. Biophys. Acta">
        <title>Three structurally and functionally conserved Hlx genes in zebrafish.</title>
        <authorList>
            <person name="Seo H.-C."/>
            <person name="Nilsen F."/>
            <person name="Fjose A."/>
        </authorList>
    </citation>
    <scope>NUCLEOTIDE SEQUENCE [MRNA]</scope>
    <scope>DEVELOPMENTAL STAGE</scope>
</reference>